<protein>
    <recommendedName>
        <fullName>Nitrogen regulatory protein P-II 1</fullName>
    </recommendedName>
</protein>
<sequence>MKKIDAIIKPFKLDDVREALAEVGITGMTVTEVKGFGRQKGHTELYRGAEYMVDFLPKVKIEIVVPDDIVDTCVDTIIRTAQTGKIGDGKIFVFDVARVIRIRTGEEDDAAI</sequence>
<accession>P0A9Z5</accession>
<accession>P05826</accession>
<dbReference type="EMBL" id="AL513382">
    <property type="protein sequence ID" value="CAD02764.1"/>
    <property type="molecule type" value="Genomic_DNA"/>
</dbReference>
<dbReference type="EMBL" id="AE014613">
    <property type="protein sequence ID" value="AAO68020.1"/>
    <property type="molecule type" value="Genomic_DNA"/>
</dbReference>
<dbReference type="RefSeq" id="NP_457091.1">
    <property type="nucleotide sequence ID" value="NC_003198.1"/>
</dbReference>
<dbReference type="RefSeq" id="WP_000717694.1">
    <property type="nucleotide sequence ID" value="NZ_WSUR01000007.1"/>
</dbReference>
<dbReference type="SMR" id="P0A9Z5"/>
<dbReference type="STRING" id="220341.gene:17586698"/>
<dbReference type="GeneID" id="93774582"/>
<dbReference type="KEGG" id="stt:t0295"/>
<dbReference type="KEGG" id="sty:STY2808"/>
<dbReference type="PATRIC" id="fig|220341.7.peg.2855"/>
<dbReference type="eggNOG" id="COG0347">
    <property type="taxonomic scope" value="Bacteria"/>
</dbReference>
<dbReference type="HOGENOM" id="CLU_082268_0_0_6"/>
<dbReference type="OMA" id="VECIIRP"/>
<dbReference type="OrthoDB" id="9802729at2"/>
<dbReference type="Proteomes" id="UP000000541">
    <property type="component" value="Chromosome"/>
</dbReference>
<dbReference type="Proteomes" id="UP000002670">
    <property type="component" value="Chromosome"/>
</dbReference>
<dbReference type="GO" id="GO:0005829">
    <property type="term" value="C:cytosol"/>
    <property type="evidence" value="ECO:0007669"/>
    <property type="project" value="TreeGrafter"/>
</dbReference>
<dbReference type="GO" id="GO:0005524">
    <property type="term" value="F:ATP binding"/>
    <property type="evidence" value="ECO:0007669"/>
    <property type="project" value="TreeGrafter"/>
</dbReference>
<dbReference type="GO" id="GO:0030234">
    <property type="term" value="F:enzyme regulator activity"/>
    <property type="evidence" value="ECO:0007669"/>
    <property type="project" value="InterPro"/>
</dbReference>
<dbReference type="GO" id="GO:0006808">
    <property type="term" value="P:regulation of nitrogen utilization"/>
    <property type="evidence" value="ECO:0007669"/>
    <property type="project" value="InterPro"/>
</dbReference>
<dbReference type="FunFam" id="3.30.70.120:FF:000001">
    <property type="entry name" value="Nitrogen regulatory protein P-II"/>
    <property type="match status" value="1"/>
</dbReference>
<dbReference type="Gene3D" id="3.30.70.120">
    <property type="match status" value="1"/>
</dbReference>
<dbReference type="InterPro" id="IPR002187">
    <property type="entry name" value="N-reg_PII"/>
</dbReference>
<dbReference type="InterPro" id="IPR011322">
    <property type="entry name" value="N-reg_PII-like_a/b"/>
</dbReference>
<dbReference type="InterPro" id="IPR015867">
    <property type="entry name" value="N-reg_PII/ATP_PRibTrfase_C"/>
</dbReference>
<dbReference type="InterPro" id="IPR017918">
    <property type="entry name" value="N-reg_PII_CS"/>
</dbReference>
<dbReference type="InterPro" id="IPR002332">
    <property type="entry name" value="N-reg_PII_urydylation_site"/>
</dbReference>
<dbReference type="NCBIfam" id="NF008111">
    <property type="entry name" value="PRK10858.1"/>
    <property type="match status" value="1"/>
</dbReference>
<dbReference type="PANTHER" id="PTHR30115">
    <property type="entry name" value="NITROGEN REGULATORY PROTEIN P-II"/>
    <property type="match status" value="1"/>
</dbReference>
<dbReference type="PANTHER" id="PTHR30115:SF11">
    <property type="entry name" value="NITROGEN REGULATORY PROTEIN P-II HOMOLOG"/>
    <property type="match status" value="1"/>
</dbReference>
<dbReference type="Pfam" id="PF00543">
    <property type="entry name" value="P-II"/>
    <property type="match status" value="1"/>
</dbReference>
<dbReference type="PIRSF" id="PIRSF039144">
    <property type="entry name" value="GlnB"/>
    <property type="match status" value="1"/>
</dbReference>
<dbReference type="PRINTS" id="PR00340">
    <property type="entry name" value="PIIGLNB"/>
</dbReference>
<dbReference type="SMART" id="SM00938">
    <property type="entry name" value="P-II"/>
    <property type="match status" value="1"/>
</dbReference>
<dbReference type="SUPFAM" id="SSF54913">
    <property type="entry name" value="GlnB-like"/>
    <property type="match status" value="1"/>
</dbReference>
<dbReference type="PROSITE" id="PS00638">
    <property type="entry name" value="PII_GLNB_CTER"/>
    <property type="match status" value="1"/>
</dbReference>
<dbReference type="PROSITE" id="PS51343">
    <property type="entry name" value="PII_GLNB_DOM"/>
    <property type="match status" value="1"/>
</dbReference>
<dbReference type="PROSITE" id="PS00496">
    <property type="entry name" value="PII_GLNB_UMP"/>
    <property type="match status" value="1"/>
</dbReference>
<comment type="function">
    <text evidence="1">P-II indirectly controls the transcription of the glutamine synthetase gene (GlnA). P-II prevents NR-II-catalyzed conversion of NR-I to NR-I-phosphate, the transcriptional activator of GlnA. When P-II is uridylylated to P-II-UMP, these events are reversed. When the ratio of Gln to 2-ketoglutarate decreases, P-II is uridylylated to P-II-UMP, which causes the deadenylation of glutamine synthetase by GlnE, so activating the enzyme (By similarity).</text>
</comment>
<comment type="subunit">
    <text evidence="1">Homotrimer.</text>
</comment>
<comment type="PTM">
    <text evidence="1">Uridylylated/deuridylylated by GlnD.</text>
</comment>
<comment type="similarity">
    <text evidence="2">Belongs to the P(II) protein family.</text>
</comment>
<organism>
    <name type="scientific">Salmonella typhi</name>
    <dbReference type="NCBI Taxonomy" id="90370"/>
    <lineage>
        <taxon>Bacteria</taxon>
        <taxon>Pseudomonadati</taxon>
        <taxon>Pseudomonadota</taxon>
        <taxon>Gammaproteobacteria</taxon>
        <taxon>Enterobacterales</taxon>
        <taxon>Enterobacteriaceae</taxon>
        <taxon>Salmonella</taxon>
    </lineage>
</organism>
<keyword id="KW-0547">Nucleotide-binding</keyword>
<keyword id="KW-0597">Phosphoprotein</keyword>
<keyword id="KW-0804">Transcription</keyword>
<keyword id="KW-0805">Transcription regulation</keyword>
<name>GLNB_SALTI</name>
<evidence type="ECO:0000250" key="1"/>
<evidence type="ECO:0000255" key="2">
    <source>
        <dbReference type="PROSITE-ProRule" id="PRU00675"/>
    </source>
</evidence>
<proteinExistence type="inferred from homology"/>
<reference key="1">
    <citation type="journal article" date="2001" name="Nature">
        <title>Complete genome sequence of a multiple drug resistant Salmonella enterica serovar Typhi CT18.</title>
        <authorList>
            <person name="Parkhill J."/>
            <person name="Dougan G."/>
            <person name="James K.D."/>
            <person name="Thomson N.R."/>
            <person name="Pickard D."/>
            <person name="Wain J."/>
            <person name="Churcher C.M."/>
            <person name="Mungall K.L."/>
            <person name="Bentley S.D."/>
            <person name="Holden M.T.G."/>
            <person name="Sebaihia M."/>
            <person name="Baker S."/>
            <person name="Basham D."/>
            <person name="Brooks K."/>
            <person name="Chillingworth T."/>
            <person name="Connerton P."/>
            <person name="Cronin A."/>
            <person name="Davis P."/>
            <person name="Davies R.M."/>
            <person name="Dowd L."/>
            <person name="White N."/>
            <person name="Farrar J."/>
            <person name="Feltwell T."/>
            <person name="Hamlin N."/>
            <person name="Haque A."/>
            <person name="Hien T.T."/>
            <person name="Holroyd S."/>
            <person name="Jagels K."/>
            <person name="Krogh A."/>
            <person name="Larsen T.S."/>
            <person name="Leather S."/>
            <person name="Moule S."/>
            <person name="O'Gaora P."/>
            <person name="Parry C."/>
            <person name="Quail M.A."/>
            <person name="Rutherford K.M."/>
            <person name="Simmonds M."/>
            <person name="Skelton J."/>
            <person name="Stevens K."/>
            <person name="Whitehead S."/>
            <person name="Barrell B.G."/>
        </authorList>
    </citation>
    <scope>NUCLEOTIDE SEQUENCE [LARGE SCALE GENOMIC DNA]</scope>
    <source>
        <strain>CT18</strain>
    </source>
</reference>
<reference key="2">
    <citation type="journal article" date="2003" name="J. Bacteriol.">
        <title>Comparative genomics of Salmonella enterica serovar Typhi strains Ty2 and CT18.</title>
        <authorList>
            <person name="Deng W."/>
            <person name="Liou S.-R."/>
            <person name="Plunkett G. III"/>
            <person name="Mayhew G.F."/>
            <person name="Rose D.J."/>
            <person name="Burland V."/>
            <person name="Kodoyianni V."/>
            <person name="Schwartz D.C."/>
            <person name="Blattner F.R."/>
        </authorList>
    </citation>
    <scope>NUCLEOTIDE SEQUENCE [LARGE SCALE GENOMIC DNA]</scope>
    <source>
        <strain>ATCC 700931 / Ty2</strain>
    </source>
</reference>
<feature type="chain" id="PRO_0000139789" description="Nitrogen regulatory protein P-II 1">
    <location>
        <begin position="1"/>
        <end position="112"/>
    </location>
</feature>
<feature type="modified residue" description="O-UMP-tyrosine" evidence="2">
    <location>
        <position position="51"/>
    </location>
</feature>
<gene>
    <name type="primary">glnB</name>
    <name type="ordered locus">STY2808</name>
    <name type="ordered locus">t0295</name>
</gene>